<name>PYRE_THET8</name>
<sequence length="183" mass="19450">MDVLELYRRTGALLEGHFLLRSGMHSPFFLQSAALLQHPLYAEAVGEALGKLFKDEKVDFVIAPAIGGVVLSFVVAKALGARALFAEKDGRGGMLIRKGLTVNPGDRFLAVEDVVTTGESVRKAIRAAEARGGVLVGVGAIVDRSGGRAAFGVPFRALLALEVPHYPEEACPLCREGVPLEEV</sequence>
<evidence type="ECO:0000255" key="1">
    <source>
        <dbReference type="HAMAP-Rule" id="MF_01208"/>
    </source>
</evidence>
<feature type="chain" id="PRO_1000066321" description="Orotate phosphoribosyltransferase">
    <location>
        <begin position="1"/>
        <end position="183"/>
    </location>
</feature>
<feature type="binding site" evidence="1">
    <location>
        <position position="21"/>
    </location>
    <ligand>
        <name>5-phospho-alpha-D-ribose 1-diphosphate</name>
        <dbReference type="ChEBI" id="CHEBI:58017"/>
    </ligand>
</feature>
<feature type="binding site" evidence="1">
    <location>
        <position position="88"/>
    </location>
    <ligand>
        <name>5-phospho-alpha-D-ribose 1-diphosphate</name>
        <dbReference type="ChEBI" id="CHEBI:58017"/>
    </ligand>
</feature>
<feature type="binding site" evidence="1">
    <location>
        <begin position="112"/>
        <end position="120"/>
    </location>
    <ligand>
        <name>5-phospho-alpha-D-ribose 1-diphosphate</name>
        <dbReference type="ChEBI" id="CHEBI:58017"/>
    </ligand>
</feature>
<feature type="binding site" evidence="1">
    <location>
        <position position="116"/>
    </location>
    <ligand>
        <name>orotate</name>
        <dbReference type="ChEBI" id="CHEBI:30839"/>
    </ligand>
</feature>
<feature type="binding site" evidence="1">
    <location>
        <position position="144"/>
    </location>
    <ligand>
        <name>orotate</name>
        <dbReference type="ChEBI" id="CHEBI:30839"/>
    </ligand>
</feature>
<keyword id="KW-0328">Glycosyltransferase</keyword>
<keyword id="KW-0460">Magnesium</keyword>
<keyword id="KW-0665">Pyrimidine biosynthesis</keyword>
<keyword id="KW-1185">Reference proteome</keyword>
<keyword id="KW-0808">Transferase</keyword>
<gene>
    <name evidence="1" type="primary">pyrE</name>
    <name type="ordered locus">TTHA1742</name>
</gene>
<comment type="function">
    <text evidence="1">Catalyzes the transfer of a ribosyl phosphate group from 5-phosphoribose 1-diphosphate to orotate, leading to the formation of orotidine monophosphate (OMP).</text>
</comment>
<comment type="catalytic activity">
    <reaction evidence="1">
        <text>orotidine 5'-phosphate + diphosphate = orotate + 5-phospho-alpha-D-ribose 1-diphosphate</text>
        <dbReference type="Rhea" id="RHEA:10380"/>
        <dbReference type="ChEBI" id="CHEBI:30839"/>
        <dbReference type="ChEBI" id="CHEBI:33019"/>
        <dbReference type="ChEBI" id="CHEBI:57538"/>
        <dbReference type="ChEBI" id="CHEBI:58017"/>
        <dbReference type="EC" id="2.4.2.10"/>
    </reaction>
</comment>
<comment type="cofactor">
    <cofactor evidence="1">
        <name>Mg(2+)</name>
        <dbReference type="ChEBI" id="CHEBI:18420"/>
    </cofactor>
</comment>
<comment type="pathway">
    <text evidence="1">Pyrimidine metabolism; UMP biosynthesis via de novo pathway; UMP from orotate: step 1/2.</text>
</comment>
<comment type="subunit">
    <text evidence="1">Homodimer.</text>
</comment>
<comment type="similarity">
    <text evidence="1">Belongs to the purine/pyrimidine phosphoribosyltransferase family. PyrE subfamily.</text>
</comment>
<protein>
    <recommendedName>
        <fullName evidence="1">Orotate phosphoribosyltransferase</fullName>
        <shortName evidence="1">OPRT</shortName>
        <shortName evidence="1">OPRTase</shortName>
        <ecNumber evidence="1">2.4.2.10</ecNumber>
    </recommendedName>
</protein>
<reference key="1">
    <citation type="submission" date="2004-11" db="EMBL/GenBank/DDBJ databases">
        <title>Complete genome sequence of Thermus thermophilus HB8.</title>
        <authorList>
            <person name="Masui R."/>
            <person name="Kurokawa K."/>
            <person name="Nakagawa N."/>
            <person name="Tokunaga F."/>
            <person name="Koyama Y."/>
            <person name="Shibata T."/>
            <person name="Oshima T."/>
            <person name="Yokoyama S."/>
            <person name="Yasunaga T."/>
            <person name="Kuramitsu S."/>
        </authorList>
    </citation>
    <scope>NUCLEOTIDE SEQUENCE [LARGE SCALE GENOMIC DNA]</scope>
    <source>
        <strain>ATCC 27634 / DSM 579 / HB8</strain>
    </source>
</reference>
<organism>
    <name type="scientific">Thermus thermophilus (strain ATCC 27634 / DSM 579 / HB8)</name>
    <dbReference type="NCBI Taxonomy" id="300852"/>
    <lineage>
        <taxon>Bacteria</taxon>
        <taxon>Thermotogati</taxon>
        <taxon>Deinococcota</taxon>
        <taxon>Deinococci</taxon>
        <taxon>Thermales</taxon>
        <taxon>Thermaceae</taxon>
        <taxon>Thermus</taxon>
    </lineage>
</organism>
<accession>Q5SHI8</accession>
<dbReference type="EC" id="2.4.2.10" evidence="1"/>
<dbReference type="EMBL" id="AP008226">
    <property type="protein sequence ID" value="BAD71565.1"/>
    <property type="molecule type" value="Genomic_DNA"/>
</dbReference>
<dbReference type="RefSeq" id="WP_011228883.1">
    <property type="nucleotide sequence ID" value="NC_006461.1"/>
</dbReference>
<dbReference type="RefSeq" id="YP_145008.1">
    <property type="nucleotide sequence ID" value="NC_006461.1"/>
</dbReference>
<dbReference type="SMR" id="Q5SHI8"/>
<dbReference type="EnsemblBacteria" id="BAD71565">
    <property type="protein sequence ID" value="BAD71565"/>
    <property type="gene ID" value="BAD71565"/>
</dbReference>
<dbReference type="GeneID" id="3169751"/>
<dbReference type="KEGG" id="ttj:TTHA1742"/>
<dbReference type="PATRIC" id="fig|300852.9.peg.1712"/>
<dbReference type="eggNOG" id="COG0461">
    <property type="taxonomic scope" value="Bacteria"/>
</dbReference>
<dbReference type="HOGENOM" id="CLU_074878_3_0_0"/>
<dbReference type="PhylomeDB" id="Q5SHI8"/>
<dbReference type="BRENDA" id="2.4.2.10">
    <property type="organism ID" value="2305"/>
</dbReference>
<dbReference type="UniPathway" id="UPA00070">
    <property type="reaction ID" value="UER00119"/>
</dbReference>
<dbReference type="Proteomes" id="UP000000532">
    <property type="component" value="Chromosome"/>
</dbReference>
<dbReference type="GO" id="GO:0000287">
    <property type="term" value="F:magnesium ion binding"/>
    <property type="evidence" value="ECO:0007669"/>
    <property type="project" value="UniProtKB-UniRule"/>
</dbReference>
<dbReference type="GO" id="GO:0004588">
    <property type="term" value="F:orotate phosphoribosyltransferase activity"/>
    <property type="evidence" value="ECO:0007669"/>
    <property type="project" value="UniProtKB-UniRule"/>
</dbReference>
<dbReference type="GO" id="GO:0044205">
    <property type="term" value="P:'de novo' UMP biosynthetic process"/>
    <property type="evidence" value="ECO:0007669"/>
    <property type="project" value="UniProtKB-UniRule"/>
</dbReference>
<dbReference type="GO" id="GO:0019856">
    <property type="term" value="P:pyrimidine nucleobase biosynthetic process"/>
    <property type="evidence" value="ECO:0007669"/>
    <property type="project" value="InterPro"/>
</dbReference>
<dbReference type="CDD" id="cd06223">
    <property type="entry name" value="PRTases_typeI"/>
    <property type="match status" value="1"/>
</dbReference>
<dbReference type="Gene3D" id="3.40.50.2020">
    <property type="match status" value="1"/>
</dbReference>
<dbReference type="HAMAP" id="MF_01208">
    <property type="entry name" value="PyrE"/>
    <property type="match status" value="1"/>
</dbReference>
<dbReference type="InterPro" id="IPR023031">
    <property type="entry name" value="OPRT"/>
</dbReference>
<dbReference type="InterPro" id="IPR006273">
    <property type="entry name" value="Orotate_PRibTrfase_bac"/>
</dbReference>
<dbReference type="InterPro" id="IPR000836">
    <property type="entry name" value="PRibTrfase_dom"/>
</dbReference>
<dbReference type="InterPro" id="IPR029057">
    <property type="entry name" value="PRTase-like"/>
</dbReference>
<dbReference type="NCBIfam" id="TIGR01367">
    <property type="entry name" value="pyrE_Therm"/>
    <property type="match status" value="1"/>
</dbReference>
<dbReference type="PANTHER" id="PTHR19278">
    <property type="entry name" value="OROTATE PHOSPHORIBOSYLTRANSFERASE"/>
    <property type="match status" value="1"/>
</dbReference>
<dbReference type="PANTHER" id="PTHR19278:SF9">
    <property type="entry name" value="URIDINE 5'-MONOPHOSPHATE SYNTHASE"/>
    <property type="match status" value="1"/>
</dbReference>
<dbReference type="Pfam" id="PF00156">
    <property type="entry name" value="Pribosyltran"/>
    <property type="match status" value="1"/>
</dbReference>
<dbReference type="SUPFAM" id="SSF53271">
    <property type="entry name" value="PRTase-like"/>
    <property type="match status" value="1"/>
</dbReference>
<dbReference type="PROSITE" id="PS00103">
    <property type="entry name" value="PUR_PYR_PR_TRANSFER"/>
    <property type="match status" value="1"/>
</dbReference>
<proteinExistence type="inferred from homology"/>